<feature type="chain" id="PRO_0000314360" description="Carboxy-S-adenosyl-L-methionine synthase">
    <location>
        <begin position="1"/>
        <end position="247"/>
    </location>
</feature>
<feature type="binding site" evidence="1">
    <location>
        <position position="40"/>
    </location>
    <ligand>
        <name>S-adenosyl-L-methionine</name>
        <dbReference type="ChEBI" id="CHEBI:59789"/>
    </ligand>
</feature>
<feature type="binding site" evidence="1">
    <location>
        <begin position="65"/>
        <end position="67"/>
    </location>
    <ligand>
        <name>S-adenosyl-L-methionine</name>
        <dbReference type="ChEBI" id="CHEBI:59789"/>
    </ligand>
</feature>
<feature type="binding site" evidence="1">
    <location>
        <begin position="90"/>
        <end position="91"/>
    </location>
    <ligand>
        <name>S-adenosyl-L-methionine</name>
        <dbReference type="ChEBI" id="CHEBI:59789"/>
    </ligand>
</feature>
<feature type="binding site" evidence="1">
    <location>
        <begin position="122"/>
        <end position="123"/>
    </location>
    <ligand>
        <name>S-adenosyl-L-methionine</name>
        <dbReference type="ChEBI" id="CHEBI:59789"/>
    </ligand>
</feature>
<feature type="binding site" evidence="1">
    <location>
        <position position="137"/>
    </location>
    <ligand>
        <name>S-adenosyl-L-methionine</name>
        <dbReference type="ChEBI" id="CHEBI:59789"/>
    </ligand>
</feature>
<feature type="binding site" evidence="1">
    <location>
        <position position="204"/>
    </location>
    <ligand>
        <name>S-adenosyl-L-methionine</name>
        <dbReference type="ChEBI" id="CHEBI:59789"/>
    </ligand>
</feature>
<comment type="function">
    <text evidence="1">Catalyzes the conversion of S-adenosyl-L-methionine (SAM) to carboxy-S-adenosyl-L-methionine (Cx-SAM).</text>
</comment>
<comment type="catalytic activity">
    <reaction evidence="1">
        <text>prephenate + S-adenosyl-L-methionine = carboxy-S-adenosyl-L-methionine + 3-phenylpyruvate + H2O</text>
        <dbReference type="Rhea" id="RHEA:51692"/>
        <dbReference type="ChEBI" id="CHEBI:15377"/>
        <dbReference type="ChEBI" id="CHEBI:18005"/>
        <dbReference type="ChEBI" id="CHEBI:29934"/>
        <dbReference type="ChEBI" id="CHEBI:59789"/>
        <dbReference type="ChEBI" id="CHEBI:134278"/>
    </reaction>
</comment>
<comment type="subunit">
    <text evidence="1">Homodimer.</text>
</comment>
<comment type="similarity">
    <text evidence="1">Belongs to the class I-like SAM-binding methyltransferase superfamily. Cx-SAM synthase family.</text>
</comment>
<name>CMOA_PSEPF</name>
<keyword id="KW-0949">S-adenosyl-L-methionine</keyword>
<keyword id="KW-0808">Transferase</keyword>
<reference key="1">
    <citation type="journal article" date="2009" name="Genome Biol.">
        <title>Genomic and genetic analyses of diversity and plant interactions of Pseudomonas fluorescens.</title>
        <authorList>
            <person name="Silby M.W."/>
            <person name="Cerdeno-Tarraga A.M."/>
            <person name="Vernikos G.S."/>
            <person name="Giddens S.R."/>
            <person name="Jackson R.W."/>
            <person name="Preston G.M."/>
            <person name="Zhang X.-X."/>
            <person name="Moon C.D."/>
            <person name="Gehrig S.M."/>
            <person name="Godfrey S.A.C."/>
            <person name="Knight C.G."/>
            <person name="Malone J.G."/>
            <person name="Robinson Z."/>
            <person name="Spiers A.J."/>
            <person name="Harris S."/>
            <person name="Challis G.L."/>
            <person name="Yaxley A.M."/>
            <person name="Harris D."/>
            <person name="Seeger K."/>
            <person name="Murphy L."/>
            <person name="Rutter S."/>
            <person name="Squares R."/>
            <person name="Quail M.A."/>
            <person name="Saunders E."/>
            <person name="Mavromatis K."/>
            <person name="Brettin T.S."/>
            <person name="Bentley S.D."/>
            <person name="Hothersall J."/>
            <person name="Stephens E."/>
            <person name="Thomas C.M."/>
            <person name="Parkhill J."/>
            <person name="Levy S.B."/>
            <person name="Rainey P.B."/>
            <person name="Thomson N.R."/>
        </authorList>
    </citation>
    <scope>NUCLEOTIDE SEQUENCE [LARGE SCALE GENOMIC DNA]</scope>
    <source>
        <strain>Pf0-1</strain>
    </source>
</reference>
<evidence type="ECO:0000255" key="1">
    <source>
        <dbReference type="HAMAP-Rule" id="MF_01589"/>
    </source>
</evidence>
<proteinExistence type="inferred from homology"/>
<dbReference type="EC" id="2.1.3.-" evidence="1"/>
<dbReference type="EMBL" id="CP000094">
    <property type="protein sequence ID" value="ABA76319.1"/>
    <property type="molecule type" value="Genomic_DNA"/>
</dbReference>
<dbReference type="SMR" id="Q3K7D5"/>
<dbReference type="KEGG" id="pfo:Pfl01_4582"/>
<dbReference type="eggNOG" id="COG4106">
    <property type="taxonomic scope" value="Bacteria"/>
</dbReference>
<dbReference type="HOGENOM" id="CLU_078475_0_0_6"/>
<dbReference type="Proteomes" id="UP000002704">
    <property type="component" value="Chromosome"/>
</dbReference>
<dbReference type="GO" id="GO:0016743">
    <property type="term" value="F:carboxyl- or carbamoyltransferase activity"/>
    <property type="evidence" value="ECO:0007669"/>
    <property type="project" value="UniProtKB-UniRule"/>
</dbReference>
<dbReference type="GO" id="GO:1904047">
    <property type="term" value="F:S-adenosyl-L-methionine binding"/>
    <property type="evidence" value="ECO:0007669"/>
    <property type="project" value="UniProtKB-UniRule"/>
</dbReference>
<dbReference type="GO" id="GO:0002098">
    <property type="term" value="P:tRNA wobble uridine modification"/>
    <property type="evidence" value="ECO:0007669"/>
    <property type="project" value="InterPro"/>
</dbReference>
<dbReference type="CDD" id="cd02440">
    <property type="entry name" value="AdoMet_MTases"/>
    <property type="match status" value="1"/>
</dbReference>
<dbReference type="Gene3D" id="3.40.50.150">
    <property type="entry name" value="Vaccinia Virus protein VP39"/>
    <property type="match status" value="1"/>
</dbReference>
<dbReference type="HAMAP" id="MF_01589">
    <property type="entry name" value="Cx_SAM_synthase"/>
    <property type="match status" value="1"/>
</dbReference>
<dbReference type="InterPro" id="IPR005271">
    <property type="entry name" value="CmoA"/>
</dbReference>
<dbReference type="InterPro" id="IPR041698">
    <property type="entry name" value="Methyltransf_25"/>
</dbReference>
<dbReference type="InterPro" id="IPR029063">
    <property type="entry name" value="SAM-dependent_MTases_sf"/>
</dbReference>
<dbReference type="NCBIfam" id="TIGR00740">
    <property type="entry name" value="carboxy-S-adenosyl-L-methionine synthase CmoA"/>
    <property type="match status" value="1"/>
</dbReference>
<dbReference type="NCBIfam" id="NF011995">
    <property type="entry name" value="PRK15451.1"/>
    <property type="match status" value="1"/>
</dbReference>
<dbReference type="PANTHER" id="PTHR43861:SF2">
    <property type="entry name" value="CARBOXY-S-ADENOSYL-L-METHIONINE SYNTHASE"/>
    <property type="match status" value="1"/>
</dbReference>
<dbReference type="PANTHER" id="PTHR43861">
    <property type="entry name" value="TRANS-ACONITATE 2-METHYLTRANSFERASE-RELATED"/>
    <property type="match status" value="1"/>
</dbReference>
<dbReference type="Pfam" id="PF13649">
    <property type="entry name" value="Methyltransf_25"/>
    <property type="match status" value="1"/>
</dbReference>
<dbReference type="PIRSF" id="PIRSF006325">
    <property type="entry name" value="MeTrfase_bac"/>
    <property type="match status" value="1"/>
</dbReference>
<dbReference type="SUPFAM" id="SSF53335">
    <property type="entry name" value="S-adenosyl-L-methionine-dependent methyltransferases"/>
    <property type="match status" value="1"/>
</dbReference>
<accession>Q3K7D5</accession>
<sequence>MSKEPDRIFAQPMAQVPDFAFNEDVVRVFPDMIKRSVPGYPTIVENLGVLAAQFAQPNSVLYDLGASLGAVTQALRRHVRTDGCRVIAVDNSAAMVERCREYLNGQDSMFQELLPVEVIEGDILALDFKPASVVALNFTLQFIAPDQRTALLSRIRQSLLPGGALILSEKLRFNDAEEHALLTDLHVAFKRANGYSELEIAQKRSAIENVMKPDSLEEHRERLLAAGFSKVVPWFQCLNFASLIALP</sequence>
<organism>
    <name type="scientific">Pseudomonas fluorescens (strain Pf0-1)</name>
    <dbReference type="NCBI Taxonomy" id="205922"/>
    <lineage>
        <taxon>Bacteria</taxon>
        <taxon>Pseudomonadati</taxon>
        <taxon>Pseudomonadota</taxon>
        <taxon>Gammaproteobacteria</taxon>
        <taxon>Pseudomonadales</taxon>
        <taxon>Pseudomonadaceae</taxon>
        <taxon>Pseudomonas</taxon>
    </lineage>
</organism>
<gene>
    <name evidence="1" type="primary">cmoA</name>
    <name type="ordered locus">Pfl01_4582</name>
</gene>
<protein>
    <recommendedName>
        <fullName evidence="1">Carboxy-S-adenosyl-L-methionine synthase</fullName>
        <shortName evidence="1">Cx-SAM synthase</shortName>
        <ecNumber evidence="1">2.1.3.-</ecNumber>
    </recommendedName>
</protein>